<evidence type="ECO:0000255" key="1">
    <source>
        <dbReference type="HAMAP-Rule" id="MF_00446"/>
    </source>
</evidence>
<feature type="chain" id="PRO_1000192001" description="Aspartate 1-decarboxylase beta chain" evidence="1">
    <location>
        <begin position="1"/>
        <end position="24"/>
    </location>
</feature>
<feature type="chain" id="PRO_1000192002" description="Aspartate 1-decarboxylase alpha chain" evidence="1">
    <location>
        <begin position="25"/>
        <end position="126"/>
    </location>
</feature>
<feature type="active site" description="Schiff-base intermediate with substrate; via pyruvic acid" evidence="1">
    <location>
        <position position="25"/>
    </location>
</feature>
<feature type="active site" description="Proton donor" evidence="1">
    <location>
        <position position="58"/>
    </location>
</feature>
<feature type="binding site" evidence="1">
    <location>
        <position position="57"/>
    </location>
    <ligand>
        <name>substrate</name>
    </ligand>
</feature>
<feature type="binding site" evidence="1">
    <location>
        <begin position="73"/>
        <end position="75"/>
    </location>
    <ligand>
        <name>substrate</name>
    </ligand>
</feature>
<feature type="modified residue" description="Pyruvic acid (Ser)" evidence="1">
    <location>
        <position position="25"/>
    </location>
</feature>
<comment type="function">
    <text evidence="1">Catalyzes the pyruvoyl-dependent decarboxylation of aspartate to produce beta-alanine.</text>
</comment>
<comment type="catalytic activity">
    <reaction evidence="1">
        <text>L-aspartate + H(+) = beta-alanine + CO2</text>
        <dbReference type="Rhea" id="RHEA:19497"/>
        <dbReference type="ChEBI" id="CHEBI:15378"/>
        <dbReference type="ChEBI" id="CHEBI:16526"/>
        <dbReference type="ChEBI" id="CHEBI:29991"/>
        <dbReference type="ChEBI" id="CHEBI:57966"/>
        <dbReference type="EC" id="4.1.1.11"/>
    </reaction>
</comment>
<comment type="cofactor">
    <cofactor evidence="1">
        <name>pyruvate</name>
        <dbReference type="ChEBI" id="CHEBI:15361"/>
    </cofactor>
    <text evidence="1">Binds 1 pyruvoyl group covalently per subunit.</text>
</comment>
<comment type="pathway">
    <text evidence="1">Cofactor biosynthesis; (R)-pantothenate biosynthesis; beta-alanine from L-aspartate: step 1/1.</text>
</comment>
<comment type="subunit">
    <text evidence="1">Heterooctamer of four alpha and four beta subunits.</text>
</comment>
<comment type="subcellular location">
    <subcellularLocation>
        <location evidence="1">Cytoplasm</location>
    </subcellularLocation>
</comment>
<comment type="PTM">
    <text evidence="1">Is synthesized initially as an inactive proenzyme, which is activated by self-cleavage at a specific serine bond to produce a beta-subunit with a hydroxyl group at its C-terminus and an alpha-subunit with a pyruvoyl group at its N-terminus.</text>
</comment>
<comment type="similarity">
    <text evidence="1">Belongs to the PanD family.</text>
</comment>
<keyword id="KW-0068">Autocatalytic cleavage</keyword>
<keyword id="KW-0963">Cytoplasm</keyword>
<keyword id="KW-0210">Decarboxylase</keyword>
<keyword id="KW-0456">Lyase</keyword>
<keyword id="KW-0566">Pantothenate biosynthesis</keyword>
<keyword id="KW-0670">Pyruvate</keyword>
<keyword id="KW-0704">Schiff base</keyword>
<keyword id="KW-0865">Zymogen</keyword>
<reference key="1">
    <citation type="journal article" date="2009" name="PLoS Genet.">
        <title>Organised genome dynamics in the Escherichia coli species results in highly diverse adaptive paths.</title>
        <authorList>
            <person name="Touchon M."/>
            <person name="Hoede C."/>
            <person name="Tenaillon O."/>
            <person name="Barbe V."/>
            <person name="Baeriswyl S."/>
            <person name="Bidet P."/>
            <person name="Bingen E."/>
            <person name="Bonacorsi S."/>
            <person name="Bouchier C."/>
            <person name="Bouvet O."/>
            <person name="Calteau A."/>
            <person name="Chiapello H."/>
            <person name="Clermont O."/>
            <person name="Cruveiller S."/>
            <person name="Danchin A."/>
            <person name="Diard M."/>
            <person name="Dossat C."/>
            <person name="Karoui M.E."/>
            <person name="Frapy E."/>
            <person name="Garry L."/>
            <person name="Ghigo J.M."/>
            <person name="Gilles A.M."/>
            <person name="Johnson J."/>
            <person name="Le Bouguenec C."/>
            <person name="Lescat M."/>
            <person name="Mangenot S."/>
            <person name="Martinez-Jehanne V."/>
            <person name="Matic I."/>
            <person name="Nassif X."/>
            <person name="Oztas S."/>
            <person name="Petit M.A."/>
            <person name="Pichon C."/>
            <person name="Rouy Z."/>
            <person name="Ruf C.S."/>
            <person name="Schneider D."/>
            <person name="Tourret J."/>
            <person name="Vacherie B."/>
            <person name="Vallenet D."/>
            <person name="Medigue C."/>
            <person name="Rocha E.P.C."/>
            <person name="Denamur E."/>
        </authorList>
    </citation>
    <scope>NUCLEOTIDE SEQUENCE [LARGE SCALE GENOMIC DNA]</scope>
    <source>
        <strain>IAI39 / ExPEC</strain>
    </source>
</reference>
<organism>
    <name type="scientific">Escherichia coli O7:K1 (strain IAI39 / ExPEC)</name>
    <dbReference type="NCBI Taxonomy" id="585057"/>
    <lineage>
        <taxon>Bacteria</taxon>
        <taxon>Pseudomonadati</taxon>
        <taxon>Pseudomonadota</taxon>
        <taxon>Gammaproteobacteria</taxon>
        <taxon>Enterobacterales</taxon>
        <taxon>Enterobacteriaceae</taxon>
        <taxon>Escherichia</taxon>
    </lineage>
</organism>
<name>PAND_ECO7I</name>
<sequence>MIRTMLQGKLHRVKVTHADLHYEGSCAIDQDFLDAAGILENEAIDIWNVTNGKRFSTYAIAAERGSRIISVNGAAAHCASVGDIVIIASFVTMPDEEARTWRPNVAYFEGDNEMKRTAKAIPVQVA</sequence>
<protein>
    <recommendedName>
        <fullName evidence="1">Aspartate 1-decarboxylase</fullName>
        <ecNumber evidence="1">4.1.1.11</ecNumber>
    </recommendedName>
    <alternativeName>
        <fullName evidence="1">Aspartate alpha-decarboxylase</fullName>
    </alternativeName>
    <component>
        <recommendedName>
            <fullName evidence="1">Aspartate 1-decarboxylase beta chain</fullName>
        </recommendedName>
    </component>
    <component>
        <recommendedName>
            <fullName evidence="1">Aspartate 1-decarboxylase alpha chain</fullName>
        </recommendedName>
    </component>
</protein>
<dbReference type="EC" id="4.1.1.11" evidence="1"/>
<dbReference type="EMBL" id="CU928164">
    <property type="protein sequence ID" value="CAR16272.1"/>
    <property type="molecule type" value="Genomic_DNA"/>
</dbReference>
<dbReference type="RefSeq" id="WP_000621515.1">
    <property type="nucleotide sequence ID" value="NC_011750.1"/>
</dbReference>
<dbReference type="RefSeq" id="YP_002406180.1">
    <property type="nucleotide sequence ID" value="NC_011750.1"/>
</dbReference>
<dbReference type="SMR" id="B7NI91"/>
<dbReference type="STRING" id="585057.ECIAI39_0131"/>
<dbReference type="GeneID" id="93777305"/>
<dbReference type="KEGG" id="ect:ECIAI39_0131"/>
<dbReference type="PATRIC" id="fig|585057.6.peg.141"/>
<dbReference type="HOGENOM" id="CLU_115305_2_1_6"/>
<dbReference type="UniPathway" id="UPA00028">
    <property type="reaction ID" value="UER00002"/>
</dbReference>
<dbReference type="Proteomes" id="UP000000749">
    <property type="component" value="Chromosome"/>
</dbReference>
<dbReference type="GO" id="GO:0005829">
    <property type="term" value="C:cytosol"/>
    <property type="evidence" value="ECO:0007669"/>
    <property type="project" value="TreeGrafter"/>
</dbReference>
<dbReference type="GO" id="GO:0004068">
    <property type="term" value="F:aspartate 1-decarboxylase activity"/>
    <property type="evidence" value="ECO:0007669"/>
    <property type="project" value="UniProtKB-UniRule"/>
</dbReference>
<dbReference type="GO" id="GO:0006523">
    <property type="term" value="P:alanine biosynthetic process"/>
    <property type="evidence" value="ECO:0007669"/>
    <property type="project" value="InterPro"/>
</dbReference>
<dbReference type="GO" id="GO:0015940">
    <property type="term" value="P:pantothenate biosynthetic process"/>
    <property type="evidence" value="ECO:0007669"/>
    <property type="project" value="UniProtKB-UniRule"/>
</dbReference>
<dbReference type="CDD" id="cd06919">
    <property type="entry name" value="Asp_decarbox"/>
    <property type="match status" value="1"/>
</dbReference>
<dbReference type="FunFam" id="2.40.40.20:FF:000004">
    <property type="entry name" value="Aspartate 1-decarboxylase"/>
    <property type="match status" value="1"/>
</dbReference>
<dbReference type="Gene3D" id="2.40.40.20">
    <property type="match status" value="1"/>
</dbReference>
<dbReference type="HAMAP" id="MF_00446">
    <property type="entry name" value="PanD"/>
    <property type="match status" value="1"/>
</dbReference>
<dbReference type="InterPro" id="IPR009010">
    <property type="entry name" value="Asp_de-COase-like_dom_sf"/>
</dbReference>
<dbReference type="InterPro" id="IPR003190">
    <property type="entry name" value="Asp_decarbox"/>
</dbReference>
<dbReference type="NCBIfam" id="TIGR00223">
    <property type="entry name" value="panD"/>
    <property type="match status" value="1"/>
</dbReference>
<dbReference type="PANTHER" id="PTHR21012">
    <property type="entry name" value="ASPARTATE 1-DECARBOXYLASE"/>
    <property type="match status" value="1"/>
</dbReference>
<dbReference type="PANTHER" id="PTHR21012:SF0">
    <property type="entry name" value="ASPARTATE 1-DECARBOXYLASE"/>
    <property type="match status" value="1"/>
</dbReference>
<dbReference type="Pfam" id="PF02261">
    <property type="entry name" value="Asp_decarbox"/>
    <property type="match status" value="1"/>
</dbReference>
<dbReference type="PIRSF" id="PIRSF006246">
    <property type="entry name" value="Asp_decarbox"/>
    <property type="match status" value="1"/>
</dbReference>
<dbReference type="SUPFAM" id="SSF50692">
    <property type="entry name" value="ADC-like"/>
    <property type="match status" value="1"/>
</dbReference>
<proteinExistence type="inferred from homology"/>
<gene>
    <name evidence="1" type="primary">panD</name>
    <name type="ordered locus">ECIAI39_0131</name>
</gene>
<accession>B7NI91</accession>